<dbReference type="EC" id="2.1.1.170" evidence="1"/>
<dbReference type="EMBL" id="AE017197">
    <property type="protein sequence ID" value="AAU03561.1"/>
    <property type="molecule type" value="Genomic_DNA"/>
</dbReference>
<dbReference type="RefSeq" id="WP_011190548.1">
    <property type="nucleotide sequence ID" value="NC_006142.1"/>
</dbReference>
<dbReference type="SMR" id="Q68XT1"/>
<dbReference type="KEGG" id="rty:RT0075"/>
<dbReference type="eggNOG" id="COG0357">
    <property type="taxonomic scope" value="Bacteria"/>
</dbReference>
<dbReference type="HOGENOM" id="CLU_065341_1_1_5"/>
<dbReference type="OrthoDB" id="9808773at2"/>
<dbReference type="Proteomes" id="UP000000604">
    <property type="component" value="Chromosome"/>
</dbReference>
<dbReference type="GO" id="GO:0005829">
    <property type="term" value="C:cytosol"/>
    <property type="evidence" value="ECO:0007669"/>
    <property type="project" value="TreeGrafter"/>
</dbReference>
<dbReference type="GO" id="GO:0070043">
    <property type="term" value="F:rRNA (guanine-N7-)-methyltransferase activity"/>
    <property type="evidence" value="ECO:0007669"/>
    <property type="project" value="UniProtKB-UniRule"/>
</dbReference>
<dbReference type="Gene3D" id="3.40.50.150">
    <property type="entry name" value="Vaccinia Virus protein VP39"/>
    <property type="match status" value="1"/>
</dbReference>
<dbReference type="HAMAP" id="MF_00074">
    <property type="entry name" value="16SrRNA_methyltr_G"/>
    <property type="match status" value="1"/>
</dbReference>
<dbReference type="InterPro" id="IPR003682">
    <property type="entry name" value="rRNA_ssu_MeTfrase_G"/>
</dbReference>
<dbReference type="InterPro" id="IPR029063">
    <property type="entry name" value="SAM-dependent_MTases_sf"/>
</dbReference>
<dbReference type="NCBIfam" id="TIGR00138">
    <property type="entry name" value="rsmG_gidB"/>
    <property type="match status" value="1"/>
</dbReference>
<dbReference type="PANTHER" id="PTHR31760">
    <property type="entry name" value="S-ADENOSYL-L-METHIONINE-DEPENDENT METHYLTRANSFERASES SUPERFAMILY PROTEIN"/>
    <property type="match status" value="1"/>
</dbReference>
<dbReference type="PANTHER" id="PTHR31760:SF0">
    <property type="entry name" value="S-ADENOSYL-L-METHIONINE-DEPENDENT METHYLTRANSFERASES SUPERFAMILY PROTEIN"/>
    <property type="match status" value="1"/>
</dbReference>
<dbReference type="Pfam" id="PF02527">
    <property type="entry name" value="GidB"/>
    <property type="match status" value="1"/>
</dbReference>
<dbReference type="PIRSF" id="PIRSF003078">
    <property type="entry name" value="GidB"/>
    <property type="match status" value="1"/>
</dbReference>
<dbReference type="SUPFAM" id="SSF53335">
    <property type="entry name" value="S-adenosyl-L-methionine-dependent methyltransferases"/>
    <property type="match status" value="1"/>
</dbReference>
<evidence type="ECO:0000255" key="1">
    <source>
        <dbReference type="HAMAP-Rule" id="MF_00074"/>
    </source>
</evidence>
<feature type="chain" id="PRO_0000184320" description="Ribosomal RNA small subunit methyltransferase G">
    <location>
        <begin position="1"/>
        <end position="191"/>
    </location>
</feature>
<feature type="binding site" evidence="1">
    <location>
        <position position="62"/>
    </location>
    <ligand>
        <name>S-adenosyl-L-methionine</name>
        <dbReference type="ChEBI" id="CHEBI:59789"/>
    </ligand>
</feature>
<feature type="binding site" evidence="1">
    <location>
        <position position="67"/>
    </location>
    <ligand>
        <name>S-adenosyl-L-methionine</name>
        <dbReference type="ChEBI" id="CHEBI:59789"/>
    </ligand>
</feature>
<feature type="binding site" evidence="1">
    <location>
        <begin position="111"/>
        <end position="112"/>
    </location>
    <ligand>
        <name>S-adenosyl-L-methionine</name>
        <dbReference type="ChEBI" id="CHEBI:59789"/>
    </ligand>
</feature>
<feature type="binding site" evidence="1">
    <location>
        <position position="124"/>
    </location>
    <ligand>
        <name>S-adenosyl-L-methionine</name>
        <dbReference type="ChEBI" id="CHEBI:59789"/>
    </ligand>
</feature>
<organism>
    <name type="scientific">Rickettsia typhi (strain ATCC VR-144 / Wilmington)</name>
    <dbReference type="NCBI Taxonomy" id="257363"/>
    <lineage>
        <taxon>Bacteria</taxon>
        <taxon>Pseudomonadati</taxon>
        <taxon>Pseudomonadota</taxon>
        <taxon>Alphaproteobacteria</taxon>
        <taxon>Rickettsiales</taxon>
        <taxon>Rickettsiaceae</taxon>
        <taxon>Rickettsieae</taxon>
        <taxon>Rickettsia</taxon>
        <taxon>typhus group</taxon>
    </lineage>
</organism>
<sequence>MEVPSEIIQKLDILQNLIKKWNKSINLISDNTIPNFWQRHILDSLQLMQYISNKEIHLVDIGSGAGFPGIVLSIAGVAKVSLIEADLRKCIFLEKASKISNNSIQIINQRIEKIEIDCNILTCRAFSNLNTIFNCTQNISVREKFLLLKGKNYLTEIVKAKEKWLFDYLIHQSITCRSGKILEVNNLTKII</sequence>
<accession>Q68XT1</accession>
<protein>
    <recommendedName>
        <fullName evidence="1">Ribosomal RNA small subunit methyltransferase G</fullName>
        <ecNumber evidence="1">2.1.1.170</ecNumber>
    </recommendedName>
    <alternativeName>
        <fullName evidence="1">16S rRNA 7-methylguanosine methyltransferase</fullName>
        <shortName evidence="1">16S rRNA m7G methyltransferase</shortName>
    </alternativeName>
</protein>
<gene>
    <name evidence="1" type="primary">rsmG</name>
    <name type="ordered locus">RT0075</name>
</gene>
<reference key="1">
    <citation type="journal article" date="2004" name="J. Bacteriol.">
        <title>Complete genome sequence of Rickettsia typhi and comparison with sequences of other Rickettsiae.</title>
        <authorList>
            <person name="McLeod M.P."/>
            <person name="Qin X."/>
            <person name="Karpathy S.E."/>
            <person name="Gioia J."/>
            <person name="Highlander S.K."/>
            <person name="Fox G.E."/>
            <person name="McNeill T.Z."/>
            <person name="Jiang H."/>
            <person name="Muzny D."/>
            <person name="Jacob L.S."/>
            <person name="Hawes A.C."/>
            <person name="Sodergren E."/>
            <person name="Gill R."/>
            <person name="Hume J."/>
            <person name="Morgan M."/>
            <person name="Fan G."/>
            <person name="Amin A.G."/>
            <person name="Gibbs R.A."/>
            <person name="Hong C."/>
            <person name="Yu X.-J."/>
            <person name="Walker D.H."/>
            <person name="Weinstock G.M."/>
        </authorList>
    </citation>
    <scope>NUCLEOTIDE SEQUENCE [LARGE SCALE GENOMIC DNA]</scope>
    <source>
        <strain>ATCC VR-144 / Wilmington</strain>
    </source>
</reference>
<keyword id="KW-0963">Cytoplasm</keyword>
<keyword id="KW-0489">Methyltransferase</keyword>
<keyword id="KW-0698">rRNA processing</keyword>
<keyword id="KW-0949">S-adenosyl-L-methionine</keyword>
<keyword id="KW-0808">Transferase</keyword>
<proteinExistence type="inferred from homology"/>
<comment type="function">
    <text evidence="1">Specifically methylates the N7 position of guanine in position 527 of 16S rRNA.</text>
</comment>
<comment type="catalytic activity">
    <reaction evidence="1">
        <text>guanosine(527) in 16S rRNA + S-adenosyl-L-methionine = N(7)-methylguanosine(527) in 16S rRNA + S-adenosyl-L-homocysteine</text>
        <dbReference type="Rhea" id="RHEA:42732"/>
        <dbReference type="Rhea" id="RHEA-COMP:10209"/>
        <dbReference type="Rhea" id="RHEA-COMP:10210"/>
        <dbReference type="ChEBI" id="CHEBI:57856"/>
        <dbReference type="ChEBI" id="CHEBI:59789"/>
        <dbReference type="ChEBI" id="CHEBI:74269"/>
        <dbReference type="ChEBI" id="CHEBI:74480"/>
        <dbReference type="EC" id="2.1.1.170"/>
    </reaction>
</comment>
<comment type="subcellular location">
    <subcellularLocation>
        <location evidence="1">Cytoplasm</location>
    </subcellularLocation>
</comment>
<comment type="similarity">
    <text evidence="1">Belongs to the methyltransferase superfamily. RNA methyltransferase RsmG family.</text>
</comment>
<name>RSMG_RICTY</name>